<dbReference type="EMBL" id="AJ719374">
    <property type="protein sequence ID" value="CAG31033.1"/>
    <property type="molecule type" value="mRNA"/>
</dbReference>
<dbReference type="RefSeq" id="NP_001008458.1">
    <property type="nucleotide sequence ID" value="NM_001008458.1"/>
</dbReference>
<dbReference type="RefSeq" id="XP_015139194.1">
    <property type="nucleotide sequence ID" value="XM_015283708.1"/>
</dbReference>
<dbReference type="SMR" id="Q5ZML0"/>
<dbReference type="FunCoup" id="Q5ZML0">
    <property type="interactions" value="770"/>
</dbReference>
<dbReference type="STRING" id="9031.ENSGALP00000016287"/>
<dbReference type="PaxDb" id="9031-ENSGALP00000016287"/>
<dbReference type="GeneID" id="421417"/>
<dbReference type="KEGG" id="gga:421417"/>
<dbReference type="CTD" id="247927"/>
<dbReference type="VEuPathDB" id="HostDB:geneid_421417"/>
<dbReference type="eggNOG" id="ENOG502QUU0">
    <property type="taxonomic scope" value="Eukaryota"/>
</dbReference>
<dbReference type="HOGENOM" id="CLU_057019_0_0_1"/>
<dbReference type="InParanoid" id="Q5ZML0"/>
<dbReference type="OMA" id="AGSTWRH"/>
<dbReference type="OrthoDB" id="538811at2759"/>
<dbReference type="PhylomeDB" id="Q5ZML0"/>
<dbReference type="TreeFam" id="TF328507"/>
<dbReference type="Reactome" id="R-GGA-5689901">
    <property type="pathway name" value="Metalloprotease DUBs"/>
</dbReference>
<dbReference type="Reactome" id="R-GGA-5693565">
    <property type="pathway name" value="Recruitment and ATM-mediated phosphorylation of repair and signaling proteins at DNA double strand breaks"/>
</dbReference>
<dbReference type="Reactome" id="R-GGA-5693571">
    <property type="pathway name" value="Nonhomologous End-Joining (NHEJ)"/>
</dbReference>
<dbReference type="Reactome" id="R-GGA-5693607">
    <property type="pathway name" value="Processing of DNA double-strand break ends"/>
</dbReference>
<dbReference type="Reactome" id="R-GGA-69473">
    <property type="pathway name" value="G2/M DNA damage checkpoint"/>
</dbReference>
<dbReference type="PRO" id="PR:Q5ZML0"/>
<dbReference type="Proteomes" id="UP000000539">
    <property type="component" value="Chromosome 3"/>
</dbReference>
<dbReference type="Bgee" id="ENSGALG00000010039">
    <property type="expression patterns" value="Expressed in muscle tissue and 14 other cell types or tissues"/>
</dbReference>
<dbReference type="GO" id="GO:0070531">
    <property type="term" value="C:BRCA1-A complex"/>
    <property type="evidence" value="ECO:0000250"/>
    <property type="project" value="UniProtKB"/>
</dbReference>
<dbReference type="GO" id="GO:0070552">
    <property type="term" value="C:BRISC complex"/>
    <property type="evidence" value="ECO:0000250"/>
    <property type="project" value="UniProtKB"/>
</dbReference>
<dbReference type="GO" id="GO:0005737">
    <property type="term" value="C:cytoplasm"/>
    <property type="evidence" value="ECO:0000250"/>
    <property type="project" value="UniProtKB"/>
</dbReference>
<dbReference type="GO" id="GO:0005634">
    <property type="term" value="C:nucleus"/>
    <property type="evidence" value="ECO:0000250"/>
    <property type="project" value="UniProtKB"/>
</dbReference>
<dbReference type="GO" id="GO:0031593">
    <property type="term" value="F:polyubiquitin modification-dependent protein binding"/>
    <property type="evidence" value="ECO:0000250"/>
    <property type="project" value="UniProtKB"/>
</dbReference>
<dbReference type="GO" id="GO:0006915">
    <property type="term" value="P:apoptotic process"/>
    <property type="evidence" value="ECO:0007669"/>
    <property type="project" value="UniProtKB-KW"/>
</dbReference>
<dbReference type="GO" id="GO:0051301">
    <property type="term" value="P:cell division"/>
    <property type="evidence" value="ECO:0007669"/>
    <property type="project" value="UniProtKB-KW"/>
</dbReference>
<dbReference type="GO" id="GO:0006325">
    <property type="term" value="P:chromatin organization"/>
    <property type="evidence" value="ECO:0007669"/>
    <property type="project" value="UniProtKB-KW"/>
</dbReference>
<dbReference type="GO" id="GO:0006302">
    <property type="term" value="P:double-strand break repair"/>
    <property type="evidence" value="ECO:0000250"/>
    <property type="project" value="UniProtKB"/>
</dbReference>
<dbReference type="GO" id="GO:0007095">
    <property type="term" value="P:mitotic G2 DNA damage checkpoint signaling"/>
    <property type="evidence" value="ECO:0000250"/>
    <property type="project" value="UniProtKB"/>
</dbReference>
<dbReference type="GO" id="GO:0045739">
    <property type="term" value="P:positive regulation of DNA repair"/>
    <property type="evidence" value="ECO:0000250"/>
    <property type="project" value="UniProtKB"/>
</dbReference>
<dbReference type="GO" id="GO:0010212">
    <property type="term" value="P:response to ionizing radiation"/>
    <property type="evidence" value="ECO:0000250"/>
    <property type="project" value="UniProtKB"/>
</dbReference>
<dbReference type="CDD" id="cd23664">
    <property type="entry name" value="BRE"/>
    <property type="match status" value="1"/>
</dbReference>
<dbReference type="InterPro" id="IPR010358">
    <property type="entry name" value="BRE"/>
</dbReference>
<dbReference type="PANTHER" id="PTHR15189">
    <property type="entry name" value="BRISC AND BRCA1-A COMPLEX MEMBER 2"/>
    <property type="match status" value="1"/>
</dbReference>
<dbReference type="PANTHER" id="PTHR15189:SF7">
    <property type="entry name" value="BRISC AND BRCA1-A COMPLEX MEMBER 2"/>
    <property type="match status" value="1"/>
</dbReference>
<dbReference type="Pfam" id="PF06113">
    <property type="entry name" value="BRE"/>
    <property type="match status" value="1"/>
</dbReference>
<name>BABA2_CHICK</name>
<accession>Q5ZML0</accession>
<feature type="chain" id="PRO_0000373935" description="BRISC and BRCA1-A complex member 2">
    <location>
        <begin position="1"/>
        <end position="383"/>
    </location>
</feature>
<feature type="region of interest" description="UEV-like 1">
    <location>
        <begin position="30"/>
        <end position="147"/>
    </location>
</feature>
<feature type="region of interest" description="UEV-like 2">
    <location>
        <begin position="275"/>
        <end position="364"/>
    </location>
</feature>
<sequence length="383" mass="43430">MSPEVALNRISPALSPFISSVVRNGKVGLDATNCLRITDLKSGCTSLTPGPSCDRFKLHIPYAGETLKWDIIFNAHYPDLPPDFIFGEDAEFLPDPSALHNLASWNPSNPECLLLVVKELVQQYHQFQCSRLRESSRLMFEYQTLLEEPQYGENMEIYAGKKNNWTGEFSARFLLKLPVDFSNIPTYLLKDVNEDPGEDVALLSVSFEDAEATQVFPKLYLSPRIEHALGGSSALHIPAFPGGGCLIDYVPQVCQLLTNKVQYVIQGYHKRREYIAAFLSHFGTGVVEYDAEGFTKLTLLLMWKDFCFLVHIDLPLYFPRDQPTLTFQSVYHFTNSGQLYSQAQKNYPYSPRWDGNEMAKRAKAYFKTFVPQFQEAAFANGKL</sequence>
<evidence type="ECO:0000250" key="1">
    <source>
        <dbReference type="UniProtKB" id="Q9NXR7"/>
    </source>
</evidence>
<evidence type="ECO:0000255" key="2"/>
<comment type="function">
    <text evidence="1">Component of the BRCA1-A complex, a complex that specifically recognizes 'Lys-63'-linked ubiquitinated histones H2A and H2AX at DNA lesions sites, leading to target the BRCA1-BARD1 heterodimer to sites of DNA damage at double-strand breaks (DSBs). The BRCA1-A complex also possesses deubiquitinase activity that specifically removes 'Lys-63'-linked ubiquitin on histones H2A and H2AX. In the BRCA1-A complex, it acts as an adapter that bridges the interaction between BABAM1/NBA1 and the rest of the complex, thereby being required for the complex integrity and modulating the E3 ubiquitin ligase activity of the BRCA1-BARD1 heterodimer. Component of the BRISC complex, a multiprotein complex that specifically cleaves 'Lys-63'-linked ubiquitin in various substrates. Within the BRISC complex, acts as an adapter that bridges the interaction between BABAM1/NBA1 and the rest of the complex, thereby being required for the complex integrity. The BRISC complex is required for normal mitotic spindle assembly and microtubule attachment to kinetochores via its role in deubiquitinating NUMA1. The BRISC complex plays a role in interferon signaling via its role in the deubiquitination of the interferon receptor IFNAR1; deubiquitination increases IFNAR1 activity by enhancing its stability and cell surface expression. Down-regulates the response to bacterial lipopolysaccharide (LPS) via its role in IFNAR1 deubiquitination. May play a role in homeostasis or cellular differentiation in cells of neural, epithelial and germline origins. May also act as a death receptor-associated anti-apoptotic protein, which inhibits the mitochondrial apoptotic pathway. May regulate TNF-alpha signaling through its interactions with TNFRSF1A; however these effects may be indirect.</text>
</comment>
<comment type="subunit">
    <text evidence="1">Component of the ARISC complex, at least composed of UIMC1/RAP80, ABRAXAS1, BRCC3/BRCC36, BABAM2 and BABAM1/NBA1. Component of the BRCA1-A complex, at least composed of BRCA1, BARD1, UIMC1/RAP80, ABRAXAS1, BRCC3/BRCC36, BABAM2 and BABAM1/NBA1. In the BRCA1-A complex, interacts directly with ABRAXAS1, BRCC3/BRCC36 and BABAM1/NBA1. Binds polyubiquitin. Component of the BRISC complex, at least composed of ABRAXAS2, BRCC3/BRCC36, BABAM2 and BABAM1/NBA1. Identified in a complex with SHMT2 and the other subunits of the BRISC complex. Component of the BRCA1/BRCA2 containing complex (BRCC), which also contains BRCA1, BRCA2, BARD1, BRCC3/BRCC36 and RAD51. BRCC is a ubiquitin E3 ligase complex that enhances cellular survival following DNA damage. May interact with FAS and TNFRSF1A.</text>
</comment>
<comment type="subcellular location">
    <subcellularLocation>
        <location evidence="1">Cytoplasm</location>
    </subcellularLocation>
    <subcellularLocation>
        <location evidence="1">Nucleus</location>
    </subcellularLocation>
    <text evidence="1">Localizes at sites of DNA damage at double-strand breaks (DSBs).</text>
</comment>
<comment type="domain">
    <text evidence="1">Contains 2 ubiquitin-conjugating enzyme family-like (UEV-like) regions. These regions lack the critical Cys residues required for ubiquitination but retain the ability to bind ubiquitin.</text>
</comment>
<comment type="similarity">
    <text evidence="2">Belongs to the BABAM2 family.</text>
</comment>
<organism>
    <name type="scientific">Gallus gallus</name>
    <name type="common">Chicken</name>
    <dbReference type="NCBI Taxonomy" id="9031"/>
    <lineage>
        <taxon>Eukaryota</taxon>
        <taxon>Metazoa</taxon>
        <taxon>Chordata</taxon>
        <taxon>Craniata</taxon>
        <taxon>Vertebrata</taxon>
        <taxon>Euteleostomi</taxon>
        <taxon>Archelosauria</taxon>
        <taxon>Archosauria</taxon>
        <taxon>Dinosauria</taxon>
        <taxon>Saurischia</taxon>
        <taxon>Theropoda</taxon>
        <taxon>Coelurosauria</taxon>
        <taxon>Aves</taxon>
        <taxon>Neognathae</taxon>
        <taxon>Galloanserae</taxon>
        <taxon>Galliformes</taxon>
        <taxon>Phasianidae</taxon>
        <taxon>Phasianinae</taxon>
        <taxon>Gallus</taxon>
    </lineage>
</organism>
<reference key="1">
    <citation type="journal article" date="2005" name="Genome Biol.">
        <title>Full-length cDNAs from chicken bursal lymphocytes to facilitate gene function analysis.</title>
        <authorList>
            <person name="Caldwell R.B."/>
            <person name="Kierzek A.M."/>
            <person name="Arakawa H."/>
            <person name="Bezzubov Y."/>
            <person name="Zaim J."/>
            <person name="Fiedler P."/>
            <person name="Kutter S."/>
            <person name="Blagodatski A."/>
            <person name="Kostovska D."/>
            <person name="Koter M."/>
            <person name="Plachy J."/>
            <person name="Carninci P."/>
            <person name="Hayashizaki Y."/>
            <person name="Buerstedde J.-M."/>
        </authorList>
    </citation>
    <scope>NUCLEOTIDE SEQUENCE [LARGE SCALE MRNA]</scope>
    <source>
        <strain>CB</strain>
        <tissue>Bursa of Fabricius</tissue>
    </source>
</reference>
<keyword id="KW-0053">Apoptosis</keyword>
<keyword id="KW-0131">Cell cycle</keyword>
<keyword id="KW-0132">Cell division</keyword>
<keyword id="KW-0156">Chromatin regulator</keyword>
<keyword id="KW-0963">Cytoplasm</keyword>
<keyword id="KW-0227">DNA damage</keyword>
<keyword id="KW-0234">DNA repair</keyword>
<keyword id="KW-0498">Mitosis</keyword>
<keyword id="KW-0539">Nucleus</keyword>
<keyword id="KW-1185">Reference proteome</keyword>
<keyword id="KW-0677">Repeat</keyword>
<keyword id="KW-0833">Ubl conjugation pathway</keyword>
<proteinExistence type="evidence at transcript level"/>
<protein>
    <recommendedName>
        <fullName>BRISC and BRCA1-A complex member 2</fullName>
    </recommendedName>
    <alternativeName>
        <fullName>BRCA1-A complex subunit BRE</fullName>
    </alternativeName>
    <alternativeName>
        <fullName>BRCA1/BRCA2-containing complex subunit 45</fullName>
    </alternativeName>
    <alternativeName>
        <fullName>Brain and reproductive organ-expressed protein</fullName>
    </alternativeName>
</protein>
<gene>
    <name type="primary">BABAM2</name>
    <name type="synonym">BRE</name>
    <name type="ORF">RCJMB04_1l17</name>
</gene>